<protein>
    <recommendedName>
        <fullName evidence="1">Ribonuclease P protein component</fullName>
        <shortName evidence="1">RNase P protein</shortName>
        <shortName evidence="1">RNaseP protein</shortName>
        <ecNumber evidence="1">3.1.26.5</ecNumber>
    </recommendedName>
    <alternativeName>
        <fullName evidence="1">Protein C5</fullName>
    </alternativeName>
</protein>
<keyword id="KW-0255">Endonuclease</keyword>
<keyword id="KW-0378">Hydrolase</keyword>
<keyword id="KW-0540">Nuclease</keyword>
<keyword id="KW-1185">Reference proteome</keyword>
<keyword id="KW-0694">RNA-binding</keyword>
<keyword id="KW-0819">tRNA processing</keyword>
<reference key="1">
    <citation type="journal article" date="1996" name="Nucleic Acids Res.">
        <title>Complete sequence analysis of the genome of the bacterium Mycoplasma pneumoniae.</title>
        <authorList>
            <person name="Himmelreich R."/>
            <person name="Hilbert H."/>
            <person name="Plagens H."/>
            <person name="Pirkl E."/>
            <person name="Li B.-C."/>
            <person name="Herrmann R."/>
        </authorList>
    </citation>
    <scope>NUCLEOTIDE SEQUENCE [LARGE SCALE GENOMIC DNA]</scope>
    <source>
        <strain>ATCC 29342 / M129 / Subtype 1</strain>
    </source>
</reference>
<gene>
    <name evidence="1" type="primary">rnpA</name>
    <name type="ordered locus">MPN_681</name>
    <name type="ORF">MP161</name>
</gene>
<accession>P75111</accession>
<proteinExistence type="inferred from homology"/>
<feature type="chain" id="PRO_0000198492" description="Ribonuclease P protein component">
    <location>
        <begin position="1"/>
        <end position="118"/>
    </location>
</feature>
<sequence length="118" mass="14003">MSAKTKHHLRDRKVFAALLRSKRRFFSTFLMAYFMPNRVRTWRAAVSISKTKYKLAVERNLIRRQVKAIMREQFCNLNAVDVLVIINQGFLELTFKEKQTIFLNLCQKLQELDAPKPK</sequence>
<dbReference type="EC" id="3.1.26.5" evidence="1"/>
<dbReference type="EMBL" id="U00089">
    <property type="protein sequence ID" value="AAB95809.1"/>
    <property type="molecule type" value="Genomic_DNA"/>
</dbReference>
<dbReference type="PIR" id="S73487">
    <property type="entry name" value="S73487"/>
</dbReference>
<dbReference type="RefSeq" id="NP_110370.1">
    <property type="nucleotide sequence ID" value="NC_000912.1"/>
</dbReference>
<dbReference type="RefSeq" id="WP_010875038.1">
    <property type="nucleotide sequence ID" value="NZ_OU342337.1"/>
</dbReference>
<dbReference type="SMR" id="P75111"/>
<dbReference type="STRING" id="272634.MPN_681"/>
<dbReference type="EnsemblBacteria" id="AAB95809">
    <property type="protein sequence ID" value="AAB95809"/>
    <property type="gene ID" value="MPN_681"/>
</dbReference>
<dbReference type="GeneID" id="66608631"/>
<dbReference type="KEGG" id="mpn:MPN_681"/>
<dbReference type="PATRIC" id="fig|272634.6.peg.748"/>
<dbReference type="HOGENOM" id="CLU_117179_7_0_14"/>
<dbReference type="OrthoDB" id="9810867at2"/>
<dbReference type="BioCyc" id="MPNE272634:G1GJ3-1090-MONOMER"/>
<dbReference type="BRENDA" id="3.1.26.5">
    <property type="organism ID" value="3534"/>
</dbReference>
<dbReference type="Proteomes" id="UP000000808">
    <property type="component" value="Chromosome"/>
</dbReference>
<dbReference type="GO" id="GO:0030677">
    <property type="term" value="C:ribonuclease P complex"/>
    <property type="evidence" value="ECO:0007669"/>
    <property type="project" value="TreeGrafter"/>
</dbReference>
<dbReference type="GO" id="GO:0042781">
    <property type="term" value="F:3'-tRNA processing endoribonuclease activity"/>
    <property type="evidence" value="ECO:0007669"/>
    <property type="project" value="TreeGrafter"/>
</dbReference>
<dbReference type="GO" id="GO:0004526">
    <property type="term" value="F:ribonuclease P activity"/>
    <property type="evidence" value="ECO:0007669"/>
    <property type="project" value="UniProtKB-UniRule"/>
</dbReference>
<dbReference type="GO" id="GO:0000049">
    <property type="term" value="F:tRNA binding"/>
    <property type="evidence" value="ECO:0007669"/>
    <property type="project" value="UniProtKB-UniRule"/>
</dbReference>
<dbReference type="GO" id="GO:0001682">
    <property type="term" value="P:tRNA 5'-leader removal"/>
    <property type="evidence" value="ECO:0007669"/>
    <property type="project" value="UniProtKB-UniRule"/>
</dbReference>
<dbReference type="Gene3D" id="3.30.230.10">
    <property type="match status" value="1"/>
</dbReference>
<dbReference type="HAMAP" id="MF_00227">
    <property type="entry name" value="RNase_P"/>
    <property type="match status" value="1"/>
</dbReference>
<dbReference type="InterPro" id="IPR020568">
    <property type="entry name" value="Ribosomal_Su5_D2-typ_SF"/>
</dbReference>
<dbReference type="InterPro" id="IPR014721">
    <property type="entry name" value="Ribsml_uS5_D2-typ_fold_subgr"/>
</dbReference>
<dbReference type="InterPro" id="IPR000100">
    <property type="entry name" value="RNase_P"/>
</dbReference>
<dbReference type="InterPro" id="IPR020539">
    <property type="entry name" value="RNase_P_CS"/>
</dbReference>
<dbReference type="NCBIfam" id="TIGR00188">
    <property type="entry name" value="rnpA"/>
    <property type="match status" value="1"/>
</dbReference>
<dbReference type="PANTHER" id="PTHR33992">
    <property type="entry name" value="RIBONUCLEASE P PROTEIN COMPONENT"/>
    <property type="match status" value="1"/>
</dbReference>
<dbReference type="PANTHER" id="PTHR33992:SF1">
    <property type="entry name" value="RIBONUCLEASE P PROTEIN COMPONENT"/>
    <property type="match status" value="1"/>
</dbReference>
<dbReference type="Pfam" id="PF00825">
    <property type="entry name" value="Ribonuclease_P"/>
    <property type="match status" value="1"/>
</dbReference>
<dbReference type="SUPFAM" id="SSF54211">
    <property type="entry name" value="Ribosomal protein S5 domain 2-like"/>
    <property type="match status" value="1"/>
</dbReference>
<dbReference type="PROSITE" id="PS00648">
    <property type="entry name" value="RIBONUCLEASE_P"/>
    <property type="match status" value="1"/>
</dbReference>
<evidence type="ECO:0000255" key="1">
    <source>
        <dbReference type="HAMAP-Rule" id="MF_00227"/>
    </source>
</evidence>
<comment type="function">
    <text evidence="1">RNaseP catalyzes the removal of the 5'-leader sequence from pre-tRNA to produce the mature 5'-terminus. It can also cleave other RNA substrates such as 4.5S RNA. The protein component plays an auxiliary but essential role in vivo by binding to the 5'-leader sequence and broadening the substrate specificity of the ribozyme.</text>
</comment>
<comment type="catalytic activity">
    <reaction evidence="1">
        <text>Endonucleolytic cleavage of RNA, removing 5'-extranucleotides from tRNA precursor.</text>
        <dbReference type="EC" id="3.1.26.5"/>
    </reaction>
</comment>
<comment type="subunit">
    <text evidence="1">Consists of a catalytic RNA component (M1 or rnpB) and a protein subunit.</text>
</comment>
<comment type="similarity">
    <text evidence="1">Belongs to the RnpA family.</text>
</comment>
<organism>
    <name type="scientific">Mycoplasma pneumoniae (strain ATCC 29342 / M129 / Subtype 1)</name>
    <name type="common">Mycoplasmoides pneumoniae</name>
    <dbReference type="NCBI Taxonomy" id="272634"/>
    <lineage>
        <taxon>Bacteria</taxon>
        <taxon>Bacillati</taxon>
        <taxon>Mycoplasmatota</taxon>
        <taxon>Mycoplasmoidales</taxon>
        <taxon>Mycoplasmoidaceae</taxon>
        <taxon>Mycoplasmoides</taxon>
    </lineage>
</organism>
<name>RNPA_MYCPN</name>